<organism evidence="1">
    <name type="scientific">Naegleria fowleri</name>
    <name type="common">Brain eating amoeba</name>
    <dbReference type="NCBI Taxonomy" id="5763"/>
    <lineage>
        <taxon>Eukaryota</taxon>
        <taxon>Discoba</taxon>
        <taxon>Heterolobosea</taxon>
        <taxon>Tetramitia</taxon>
        <taxon>Eutetramitia</taxon>
        <taxon>Vahlkampfiidae</taxon>
        <taxon>Naegleria</taxon>
    </lineage>
</organism>
<accession>P83727</accession>
<reference evidence="1" key="1">
    <citation type="submission" date="2003-12" db="UniProtKB">
        <title>Comparative study of protein profiles on pathogenic and nonpathogenic Naegleria species by 2D-PAGE.</title>
        <authorList>
            <person name="Omura M."/>
            <person name="Furushima-Shimogawara R."/>
            <person name="Izumiyama S."/>
            <person name="Endo T."/>
        </authorList>
    </citation>
    <scope>PROTEIN SEQUENCE</scope>
    <source>
        <strain>ATCC 30214 / Nf 66</strain>
    </source>
</reference>
<sequence length="19" mass="2253">VEQFHFSXEXVTEGHQDKI</sequence>
<keyword id="KW-0903">Direct protein sequencing</keyword>
<feature type="chain" id="PRO_0000055494" description="Unknown protein NF037 from 2D-PAGE">
    <location>
        <begin position="1"/>
        <end position="19" status="greater than"/>
    </location>
</feature>
<feature type="non-terminal residue" evidence="1">
    <location>
        <position position="19"/>
    </location>
</feature>
<proteinExistence type="evidence at protein level"/>
<protein>
    <recommendedName>
        <fullName>Unknown protein NF037 from 2D-PAGE</fullName>
    </recommendedName>
</protein>
<name>NF37_NAEFO</name>
<evidence type="ECO:0000305" key="1"/>
<comment type="miscellaneous">
    <text evidence="1">On the 2D-gel the determined pI of this unknown protein is: 6.5, its MW is: 33.2 kDa.</text>
</comment>